<name>P5CR2_BOVIN</name>
<proteinExistence type="evidence at transcript level"/>
<feature type="initiator methionine" description="Removed" evidence="2">
    <location>
        <position position="1"/>
    </location>
</feature>
<feature type="chain" id="PRO_0000270819" description="Pyrroline-5-carboxylate reductase 2">
    <location>
        <begin position="2"/>
        <end position="320"/>
    </location>
</feature>
<feature type="region of interest" description="Disordered" evidence="3">
    <location>
        <begin position="298"/>
        <end position="320"/>
    </location>
</feature>
<feature type="binding site" evidence="1">
    <location>
        <begin position="6"/>
        <end position="11"/>
    </location>
    <ligand>
        <name>NADP(+)</name>
        <dbReference type="ChEBI" id="CHEBI:58349"/>
    </ligand>
</feature>
<feature type="binding site" evidence="1">
    <location>
        <position position="8"/>
    </location>
    <ligand>
        <name>NADPH</name>
        <dbReference type="ChEBI" id="CHEBI:57783"/>
    </ligand>
</feature>
<feature type="binding site" evidence="1">
    <location>
        <position position="10"/>
    </location>
    <ligand>
        <name>NADPH</name>
        <dbReference type="ChEBI" id="CHEBI:57783"/>
    </ligand>
</feature>
<feature type="binding site" evidence="1">
    <location>
        <position position="11"/>
    </location>
    <ligand>
        <name>NADPH</name>
        <dbReference type="ChEBI" id="CHEBI:57783"/>
    </ligand>
</feature>
<feature type="binding site" evidence="1">
    <location>
        <position position="34"/>
    </location>
    <ligand>
        <name>NADP(+)</name>
        <dbReference type="ChEBI" id="CHEBI:58349"/>
    </ligand>
</feature>
<feature type="binding site" evidence="1">
    <location>
        <position position="34"/>
    </location>
    <ligand>
        <name>NADPH</name>
        <dbReference type="ChEBI" id="CHEBI:57783"/>
    </ligand>
</feature>
<feature type="binding site" evidence="1">
    <location>
        <position position="36"/>
    </location>
    <ligand>
        <name>NADPH</name>
        <dbReference type="ChEBI" id="CHEBI:57783"/>
    </ligand>
</feature>
<feature type="binding site" evidence="1">
    <location>
        <position position="56"/>
    </location>
    <ligand>
        <name>NADP(+)</name>
        <dbReference type="ChEBI" id="CHEBI:58349"/>
    </ligand>
</feature>
<feature type="binding site" evidence="1">
    <location>
        <position position="56"/>
    </location>
    <ligand>
        <name>NADPH</name>
        <dbReference type="ChEBI" id="CHEBI:57783"/>
    </ligand>
</feature>
<feature type="binding site" evidence="1">
    <location>
        <begin position="69"/>
        <end position="72"/>
    </location>
    <ligand>
        <name>NADP(+)</name>
        <dbReference type="ChEBI" id="CHEBI:58349"/>
    </ligand>
</feature>
<feature type="binding site" evidence="1">
    <location>
        <position position="70"/>
    </location>
    <ligand>
        <name>NADPH</name>
        <dbReference type="ChEBI" id="CHEBI:57783"/>
    </ligand>
</feature>
<feature type="binding site" evidence="1">
    <location>
        <position position="71"/>
    </location>
    <ligand>
        <name>NADPH</name>
        <dbReference type="ChEBI" id="CHEBI:57783"/>
    </ligand>
</feature>
<feature type="binding site" evidence="1">
    <location>
        <begin position="95"/>
        <end position="97"/>
    </location>
    <ligand>
        <name>NADP(+)</name>
        <dbReference type="ChEBI" id="CHEBI:58349"/>
    </ligand>
</feature>
<feature type="binding site" evidence="1">
    <location>
        <position position="97"/>
    </location>
    <ligand>
        <name>NADPH</name>
        <dbReference type="ChEBI" id="CHEBI:57783"/>
    </ligand>
</feature>
<feature type="binding site" evidence="1">
    <location>
        <position position="164"/>
    </location>
    <ligand>
        <name>L-proline</name>
        <dbReference type="ChEBI" id="CHEBI:60039"/>
    </ligand>
</feature>
<feature type="binding site" evidence="1">
    <location>
        <position position="230"/>
    </location>
    <ligand>
        <name>NADPH</name>
        <dbReference type="ChEBI" id="CHEBI:57783"/>
    </ligand>
</feature>
<feature type="binding site" evidence="1">
    <location>
        <position position="237"/>
    </location>
    <ligand>
        <name>L-proline</name>
        <dbReference type="ChEBI" id="CHEBI:60039"/>
    </ligand>
</feature>
<feature type="binding site" evidence="1">
    <location>
        <position position="238"/>
    </location>
    <ligand>
        <name>L-proline</name>
        <dbReference type="ChEBI" id="CHEBI:60039"/>
    </ligand>
</feature>
<feature type="modified residue" description="N-acetylserine" evidence="2">
    <location>
        <position position="2"/>
    </location>
</feature>
<feature type="modified residue" description="Phosphoserine" evidence="2">
    <location>
        <position position="304"/>
    </location>
</feature>
<reference key="1">
    <citation type="submission" date="2006-06" db="EMBL/GenBank/DDBJ databases">
        <authorList>
            <consortium name="NIH - Mammalian Gene Collection (MGC) project"/>
        </authorList>
    </citation>
    <scope>NUCLEOTIDE SEQUENCE [LARGE SCALE MRNA]</scope>
    <source>
        <strain>Hereford</strain>
        <tissue>Fetal muscle</tissue>
    </source>
</reference>
<dbReference type="EC" id="1.5.1.2" evidence="2"/>
<dbReference type="EMBL" id="BC118324">
    <property type="protein sequence ID" value="AAI18325.1"/>
    <property type="molecule type" value="mRNA"/>
</dbReference>
<dbReference type="RefSeq" id="NP_001068649.1">
    <property type="nucleotide sequence ID" value="NM_001075181.1"/>
</dbReference>
<dbReference type="SMR" id="Q17QJ7"/>
<dbReference type="FunCoup" id="Q17QJ7">
    <property type="interactions" value="2342"/>
</dbReference>
<dbReference type="STRING" id="9913.ENSBTAP00000061590"/>
<dbReference type="PaxDb" id="9913-ENSBTAP00000000047"/>
<dbReference type="PeptideAtlas" id="Q17QJ7"/>
<dbReference type="Ensembl" id="ENSBTAT00000000047.6">
    <property type="protein sequence ID" value="ENSBTAP00000000047.4"/>
    <property type="gene ID" value="ENSBTAG00000005835.6"/>
</dbReference>
<dbReference type="GeneID" id="504987"/>
<dbReference type="KEGG" id="bta:504987"/>
<dbReference type="CTD" id="29920"/>
<dbReference type="VEuPathDB" id="HostDB:ENSBTAG00000005835"/>
<dbReference type="eggNOG" id="KOG3124">
    <property type="taxonomic scope" value="Eukaryota"/>
</dbReference>
<dbReference type="GeneTree" id="ENSGT00950000183044"/>
<dbReference type="HOGENOM" id="CLU_042344_3_0_1"/>
<dbReference type="InParanoid" id="Q17QJ7"/>
<dbReference type="OMA" id="YYFIESL"/>
<dbReference type="OrthoDB" id="10263291at2759"/>
<dbReference type="Reactome" id="R-BTA-8964539">
    <property type="pathway name" value="Glutamate and glutamine metabolism"/>
</dbReference>
<dbReference type="UniPathway" id="UPA00098">
    <property type="reaction ID" value="UER00361"/>
</dbReference>
<dbReference type="Proteomes" id="UP000009136">
    <property type="component" value="Chromosome 16"/>
</dbReference>
<dbReference type="Bgee" id="ENSBTAG00000005835">
    <property type="expression patterns" value="Expressed in retina and 106 other cell types or tissues"/>
</dbReference>
<dbReference type="GO" id="GO:0005739">
    <property type="term" value="C:mitochondrion"/>
    <property type="evidence" value="ECO:0000250"/>
    <property type="project" value="UniProtKB"/>
</dbReference>
<dbReference type="GO" id="GO:0004735">
    <property type="term" value="F:pyrroline-5-carboxylate reductase activity"/>
    <property type="evidence" value="ECO:0000250"/>
    <property type="project" value="UniProtKB"/>
</dbReference>
<dbReference type="GO" id="GO:0034599">
    <property type="term" value="P:cellular response to oxidative stress"/>
    <property type="evidence" value="ECO:0000250"/>
    <property type="project" value="UniProtKB"/>
</dbReference>
<dbReference type="GO" id="GO:0055129">
    <property type="term" value="P:L-proline biosynthetic process"/>
    <property type="evidence" value="ECO:0000318"/>
    <property type="project" value="GO_Central"/>
</dbReference>
<dbReference type="GO" id="GO:0006561">
    <property type="term" value="P:proline biosynthetic process"/>
    <property type="evidence" value="ECO:0000250"/>
    <property type="project" value="UniProtKB"/>
</dbReference>
<dbReference type="FunFam" id="3.40.50.720:FF:000064">
    <property type="entry name" value="Pyrroline-5-carboxylate reductase 1"/>
    <property type="match status" value="1"/>
</dbReference>
<dbReference type="FunFam" id="1.10.3730.10:FF:000003">
    <property type="entry name" value="Pyrroline-5-carboxylate reductase 1, mitochondrial"/>
    <property type="match status" value="1"/>
</dbReference>
<dbReference type="Gene3D" id="3.40.50.720">
    <property type="entry name" value="NAD(P)-binding Rossmann-like Domain"/>
    <property type="match status" value="1"/>
</dbReference>
<dbReference type="Gene3D" id="1.10.3730.10">
    <property type="entry name" value="ProC C-terminal domain-like"/>
    <property type="match status" value="1"/>
</dbReference>
<dbReference type="HAMAP" id="MF_01925">
    <property type="entry name" value="P5C_reductase"/>
    <property type="match status" value="1"/>
</dbReference>
<dbReference type="InterPro" id="IPR008927">
    <property type="entry name" value="6-PGluconate_DH-like_C_sf"/>
</dbReference>
<dbReference type="InterPro" id="IPR036291">
    <property type="entry name" value="NAD(P)-bd_dom_sf"/>
</dbReference>
<dbReference type="InterPro" id="IPR028939">
    <property type="entry name" value="P5C_Rdtase_cat_N"/>
</dbReference>
<dbReference type="InterPro" id="IPR053790">
    <property type="entry name" value="P5CR-like_CS"/>
</dbReference>
<dbReference type="InterPro" id="IPR029036">
    <property type="entry name" value="P5CR_dimer"/>
</dbReference>
<dbReference type="InterPro" id="IPR000304">
    <property type="entry name" value="Pyrroline-COOH_reductase"/>
</dbReference>
<dbReference type="NCBIfam" id="TIGR00112">
    <property type="entry name" value="proC"/>
    <property type="match status" value="1"/>
</dbReference>
<dbReference type="PANTHER" id="PTHR11645">
    <property type="entry name" value="PYRROLINE-5-CARBOXYLATE REDUCTASE"/>
    <property type="match status" value="1"/>
</dbReference>
<dbReference type="PANTHER" id="PTHR11645:SF61">
    <property type="entry name" value="PYRROLINE-5-CARBOXYLATE REDUCTASE 2"/>
    <property type="match status" value="1"/>
</dbReference>
<dbReference type="Pfam" id="PF03807">
    <property type="entry name" value="F420_oxidored"/>
    <property type="match status" value="1"/>
</dbReference>
<dbReference type="Pfam" id="PF14748">
    <property type="entry name" value="P5CR_dimer"/>
    <property type="match status" value="1"/>
</dbReference>
<dbReference type="PIRSF" id="PIRSF000193">
    <property type="entry name" value="Pyrrol-5-carb_rd"/>
    <property type="match status" value="1"/>
</dbReference>
<dbReference type="SUPFAM" id="SSF48179">
    <property type="entry name" value="6-phosphogluconate dehydrogenase C-terminal domain-like"/>
    <property type="match status" value="1"/>
</dbReference>
<dbReference type="SUPFAM" id="SSF51735">
    <property type="entry name" value="NAD(P)-binding Rossmann-fold domains"/>
    <property type="match status" value="1"/>
</dbReference>
<dbReference type="PROSITE" id="PS00521">
    <property type="entry name" value="P5CR"/>
    <property type="match status" value="1"/>
</dbReference>
<evidence type="ECO:0000250" key="1">
    <source>
        <dbReference type="UniProtKB" id="P32322"/>
    </source>
</evidence>
<evidence type="ECO:0000250" key="2">
    <source>
        <dbReference type="UniProtKB" id="Q96C36"/>
    </source>
</evidence>
<evidence type="ECO:0000256" key="3">
    <source>
        <dbReference type="SAM" id="MobiDB-lite"/>
    </source>
</evidence>
<evidence type="ECO:0000305" key="4"/>
<keyword id="KW-0007">Acetylation</keyword>
<keyword id="KW-0028">Amino-acid biosynthesis</keyword>
<keyword id="KW-0963">Cytoplasm</keyword>
<keyword id="KW-0496">Mitochondrion</keyword>
<keyword id="KW-0521">NADP</keyword>
<keyword id="KW-0560">Oxidoreductase</keyword>
<keyword id="KW-0597">Phosphoprotein</keyword>
<keyword id="KW-0641">Proline biosynthesis</keyword>
<keyword id="KW-1185">Reference proteome</keyword>
<sequence>MSVGFIGAGQLACALARGFTAAGILSAHKIIASSPEMDLPTVSALRKMGVNLTRSNKETVRHSDVLFLAVKPHIIPFILDEIGADVQARHIVVSCAAGVTISSVEKKLMAFQPAPKVIRCMTNTPVLVREGATVYATGTHALVEDGQLLEQLMSSVGFCTEVEEDLIDAVTGLSGSGPAYAFMALDALADGGVKMGLPRRLAVRLGAQALLGAAKMLLDSEQHPGQLKDNVCSPGGATIHALHFLESGGFRSLLINAVEASCIRTRELQSMADQEKISPAALKKTLLDRVKLESPTVTTLTPTSSGKLLTRSPVPGGKKD</sequence>
<comment type="function">
    <text evidence="2">Oxidoreductase that catalyzes the last step in proline biosynthesis, which corresponds to the reduction of pyrroline-5-carboxylate to L-proline using NAD(P)H. At physiologic concentrations, has higher specific activity in the presence of NADH. Involved in cellular response to oxidative stress. In some cell types, such as erythrocytes, its primary function may be the generation of NADP(+).</text>
</comment>
<comment type="catalytic activity">
    <reaction evidence="2">
        <text>L-proline + NADP(+) = (S)-1-pyrroline-5-carboxylate + NADPH + 2 H(+)</text>
        <dbReference type="Rhea" id="RHEA:14109"/>
        <dbReference type="ChEBI" id="CHEBI:15378"/>
        <dbReference type="ChEBI" id="CHEBI:17388"/>
        <dbReference type="ChEBI" id="CHEBI:57783"/>
        <dbReference type="ChEBI" id="CHEBI:58349"/>
        <dbReference type="ChEBI" id="CHEBI:60039"/>
        <dbReference type="EC" id="1.5.1.2"/>
    </reaction>
    <physiologicalReaction direction="right-to-left" evidence="2">
        <dbReference type="Rhea" id="RHEA:14111"/>
    </physiologicalReaction>
</comment>
<comment type="catalytic activity">
    <reaction evidence="2">
        <text>L-proline + NAD(+) = (S)-1-pyrroline-5-carboxylate + NADH + 2 H(+)</text>
        <dbReference type="Rhea" id="RHEA:14105"/>
        <dbReference type="ChEBI" id="CHEBI:15378"/>
        <dbReference type="ChEBI" id="CHEBI:17388"/>
        <dbReference type="ChEBI" id="CHEBI:57540"/>
        <dbReference type="ChEBI" id="CHEBI:57945"/>
        <dbReference type="ChEBI" id="CHEBI:60039"/>
        <dbReference type="EC" id="1.5.1.2"/>
    </reaction>
    <physiologicalReaction direction="right-to-left" evidence="2">
        <dbReference type="Rhea" id="RHEA:14107"/>
    </physiologicalReaction>
</comment>
<comment type="pathway">
    <text>Amino-acid biosynthesis; L-proline biosynthesis; L-proline from L-glutamate 5-semialdehyde: step 1/1.</text>
</comment>
<comment type="subunit">
    <text evidence="2">Homodecamer; composed of 5 homodimers. Interacts with LTO1.</text>
</comment>
<comment type="subcellular location">
    <subcellularLocation>
        <location evidence="2">Cytoplasm</location>
    </subcellularLocation>
    <subcellularLocation>
        <location evidence="2">Mitochondrion</location>
    </subcellularLocation>
</comment>
<comment type="similarity">
    <text evidence="4">Belongs to the pyrroline-5-carboxylate reductase family.</text>
</comment>
<organism>
    <name type="scientific">Bos taurus</name>
    <name type="common">Bovine</name>
    <dbReference type="NCBI Taxonomy" id="9913"/>
    <lineage>
        <taxon>Eukaryota</taxon>
        <taxon>Metazoa</taxon>
        <taxon>Chordata</taxon>
        <taxon>Craniata</taxon>
        <taxon>Vertebrata</taxon>
        <taxon>Euteleostomi</taxon>
        <taxon>Mammalia</taxon>
        <taxon>Eutheria</taxon>
        <taxon>Laurasiatheria</taxon>
        <taxon>Artiodactyla</taxon>
        <taxon>Ruminantia</taxon>
        <taxon>Pecora</taxon>
        <taxon>Bovidae</taxon>
        <taxon>Bovinae</taxon>
        <taxon>Bos</taxon>
    </lineage>
</organism>
<accession>Q17QJ7</accession>
<protein>
    <recommendedName>
        <fullName>Pyrroline-5-carboxylate reductase 2</fullName>
        <shortName>P5C reductase 2</shortName>
        <shortName>P5CR 2</shortName>
        <ecNumber evidence="2">1.5.1.2</ecNumber>
    </recommendedName>
</protein>
<gene>
    <name type="primary">PYCR2</name>
</gene>